<organism>
    <name type="scientific">Caenorhabditis elegans</name>
    <dbReference type="NCBI Taxonomy" id="6239"/>
    <lineage>
        <taxon>Eukaryota</taxon>
        <taxon>Metazoa</taxon>
        <taxon>Ecdysozoa</taxon>
        <taxon>Nematoda</taxon>
        <taxon>Chromadorea</taxon>
        <taxon>Rhabditida</taxon>
        <taxon>Rhabditina</taxon>
        <taxon>Rhabditomorpha</taxon>
        <taxon>Rhabditoidea</taxon>
        <taxon>Rhabditidae</taxon>
        <taxon>Peloderinae</taxon>
        <taxon>Caenorhabditis</taxon>
    </lineage>
</organism>
<name>MSRB_CAEEL</name>
<dbReference type="EC" id="1.8.4.12" evidence="1"/>
<dbReference type="EMBL" id="FO081383">
    <property type="protein sequence ID" value="CCD71223.1"/>
    <property type="molecule type" value="Genomic_DNA"/>
</dbReference>
<dbReference type="PIR" id="S44820">
    <property type="entry name" value="S44820"/>
</dbReference>
<dbReference type="RefSeq" id="NP_001254966.1">
    <property type="nucleotide sequence ID" value="NM_001268037.1"/>
</dbReference>
<dbReference type="RefSeq" id="NP_001360042.1">
    <property type="nucleotide sequence ID" value="NM_001372638.3"/>
</dbReference>
<dbReference type="SMR" id="P34436"/>
<dbReference type="BioGRID" id="41446">
    <property type="interactions" value="2"/>
</dbReference>
<dbReference type="FunCoup" id="P34436">
    <property type="interactions" value="884"/>
</dbReference>
<dbReference type="STRING" id="6239.F44E2.6a.1"/>
<dbReference type="PaxDb" id="6239-F44E2.6a"/>
<dbReference type="PeptideAtlas" id="P34436"/>
<dbReference type="EnsemblMetazoa" id="F44E2.6a.1">
    <property type="protein sequence ID" value="F44E2.6a.1"/>
    <property type="gene ID" value="WBGene00018419"/>
</dbReference>
<dbReference type="EnsemblMetazoa" id="F44E2.6a.2">
    <property type="protein sequence ID" value="F44E2.6a.2"/>
    <property type="gene ID" value="WBGene00018419"/>
</dbReference>
<dbReference type="GeneID" id="176244"/>
<dbReference type="UCSC" id="F44E2.6b">
    <property type="organism name" value="c. elegans"/>
</dbReference>
<dbReference type="AGR" id="WB:WBGene00018419"/>
<dbReference type="WormBase" id="F44E2.6a">
    <property type="protein sequence ID" value="CE00184"/>
    <property type="gene ID" value="WBGene00018419"/>
</dbReference>
<dbReference type="eggNOG" id="KOG0856">
    <property type="taxonomic scope" value="Eukaryota"/>
</dbReference>
<dbReference type="InParanoid" id="P34436"/>
<dbReference type="OMA" id="YDETTDW"/>
<dbReference type="OrthoDB" id="44061at2759"/>
<dbReference type="PhylomeDB" id="P34436"/>
<dbReference type="Reactome" id="R-CEL-5676934">
    <property type="pathway name" value="Protein repair"/>
</dbReference>
<dbReference type="PRO" id="PR:P34436"/>
<dbReference type="Proteomes" id="UP000001940">
    <property type="component" value="Chromosome III"/>
</dbReference>
<dbReference type="Bgee" id="WBGene00018419">
    <property type="expression patterns" value="Expressed in embryo and 4 other cell types or tissues"/>
</dbReference>
<dbReference type="ExpressionAtlas" id="P34436">
    <property type="expression patterns" value="baseline and differential"/>
</dbReference>
<dbReference type="GO" id="GO:0005737">
    <property type="term" value="C:cytoplasm"/>
    <property type="evidence" value="ECO:0000318"/>
    <property type="project" value="GO_Central"/>
</dbReference>
<dbReference type="GO" id="GO:0046872">
    <property type="term" value="F:metal ion binding"/>
    <property type="evidence" value="ECO:0007669"/>
    <property type="project" value="UniProtKB-KW"/>
</dbReference>
<dbReference type="GO" id="GO:0033743">
    <property type="term" value="F:peptide-methionine (R)-S-oxide reductase activity"/>
    <property type="evidence" value="ECO:0000318"/>
    <property type="project" value="GO_Central"/>
</dbReference>
<dbReference type="GO" id="GO:0030091">
    <property type="term" value="P:protein repair"/>
    <property type="evidence" value="ECO:0007669"/>
    <property type="project" value="InterPro"/>
</dbReference>
<dbReference type="GO" id="GO:0006979">
    <property type="term" value="P:response to oxidative stress"/>
    <property type="evidence" value="ECO:0007669"/>
    <property type="project" value="InterPro"/>
</dbReference>
<dbReference type="FunFam" id="2.170.150.20:FF:000009">
    <property type="entry name" value="Peptide-methionine (R)-S-oxide reductase"/>
    <property type="match status" value="1"/>
</dbReference>
<dbReference type="Gene3D" id="2.170.150.20">
    <property type="entry name" value="Peptide methionine sulfoxide reductase"/>
    <property type="match status" value="1"/>
</dbReference>
<dbReference type="InterPro" id="IPR028427">
    <property type="entry name" value="Met_Sox_Rdtase_MsrB"/>
</dbReference>
<dbReference type="InterPro" id="IPR002579">
    <property type="entry name" value="Met_Sox_Rdtase_MsrB_dom"/>
</dbReference>
<dbReference type="InterPro" id="IPR011057">
    <property type="entry name" value="Mss4-like_sf"/>
</dbReference>
<dbReference type="NCBIfam" id="TIGR00357">
    <property type="entry name" value="peptide-methionine (R)-S-oxide reductase MsrB"/>
    <property type="match status" value="1"/>
</dbReference>
<dbReference type="PANTHER" id="PTHR10173">
    <property type="entry name" value="METHIONINE SULFOXIDE REDUCTASE"/>
    <property type="match status" value="1"/>
</dbReference>
<dbReference type="PANTHER" id="PTHR10173:SF52">
    <property type="entry name" value="METHIONINE-R-SULFOXIDE REDUCTASE B1"/>
    <property type="match status" value="1"/>
</dbReference>
<dbReference type="Pfam" id="PF01641">
    <property type="entry name" value="SelR"/>
    <property type="match status" value="1"/>
</dbReference>
<dbReference type="SUPFAM" id="SSF51316">
    <property type="entry name" value="Mss4-like"/>
    <property type="match status" value="1"/>
</dbReference>
<dbReference type="PROSITE" id="PS51790">
    <property type="entry name" value="MSRB"/>
    <property type="match status" value="1"/>
</dbReference>
<comment type="function">
    <text evidence="1">Methionine-sulfoxide reductase that specifically reduces methionine (R)-sulfoxide back to methionine (By similarity). While in many cases, methionine oxidation is the result of random oxidation following oxidative stress, methionine oxidation is also a post-translational modification that takes place on specific residue (By similarity).</text>
</comment>
<comment type="catalytic activity">
    <reaction evidence="1">
        <text>L-methionyl-[protein] + [thioredoxin]-disulfide + H2O = L-methionyl-(R)-S-oxide-[protein] + [thioredoxin]-dithiol</text>
        <dbReference type="Rhea" id="RHEA:24164"/>
        <dbReference type="Rhea" id="RHEA-COMP:10698"/>
        <dbReference type="Rhea" id="RHEA-COMP:10700"/>
        <dbReference type="Rhea" id="RHEA-COMP:12313"/>
        <dbReference type="Rhea" id="RHEA-COMP:12314"/>
        <dbReference type="ChEBI" id="CHEBI:15377"/>
        <dbReference type="ChEBI" id="CHEBI:16044"/>
        <dbReference type="ChEBI" id="CHEBI:29950"/>
        <dbReference type="ChEBI" id="CHEBI:45764"/>
        <dbReference type="ChEBI" id="CHEBI:50058"/>
        <dbReference type="EC" id="1.8.4.12"/>
    </reaction>
</comment>
<comment type="cofactor">
    <cofactor evidence="1">
        <name>Zn(2+)</name>
        <dbReference type="ChEBI" id="CHEBI:29105"/>
    </cofactor>
    <text evidence="1">Binds 1 zinc ion per subunit.</text>
</comment>
<comment type="similarity">
    <text evidence="3">Belongs to the MsrB Met sulfoxide reductase family.</text>
</comment>
<sequence length="152" mass="17212">MTTKKFRMEDVGLSKLKVEKNPKDVKQTEWKSVLPNEVYRVARESGTETPHTGGFNDHFEKGRYVCLCCGSELFNSDAKFWAGCGWPAFSESVGQDANIVRIVDRSHGMHRTEVRCKTCDAHLGHVFNDGPKETTGERYCINSVCMAFEKKD</sequence>
<keyword id="KW-0479">Metal-binding</keyword>
<keyword id="KW-0560">Oxidoreductase</keyword>
<keyword id="KW-1185">Reference proteome</keyword>
<keyword id="KW-0862">Zinc</keyword>
<protein>
    <recommendedName>
        <fullName evidence="3">Probable methionine-R-sulfoxide reductase B</fullName>
        <ecNumber evidence="1">1.8.4.12</ecNumber>
    </recommendedName>
</protein>
<evidence type="ECO:0000250" key="1">
    <source>
        <dbReference type="UniProtKB" id="Q9JLC3"/>
    </source>
</evidence>
<evidence type="ECO:0000255" key="2">
    <source>
        <dbReference type="PROSITE-ProRule" id="PRU01126"/>
    </source>
</evidence>
<evidence type="ECO:0000305" key="3"/>
<evidence type="ECO:0000312" key="4">
    <source>
        <dbReference type="WormBase" id="F44E2.6a"/>
    </source>
</evidence>
<gene>
    <name evidence="4" type="ORF">F44E2.6</name>
</gene>
<accession>P34436</accession>
<feature type="chain" id="PRO_0000140325" description="Probable methionine-R-sulfoxide reductase B">
    <location>
        <begin position="1"/>
        <end position="152"/>
    </location>
</feature>
<feature type="domain" description="MsrB" evidence="2">
    <location>
        <begin position="27"/>
        <end position="151"/>
    </location>
</feature>
<feature type="active site" description="Nucleophile" evidence="2">
    <location>
        <position position="140"/>
    </location>
</feature>
<feature type="binding site" evidence="2">
    <location>
        <position position="66"/>
    </location>
    <ligand>
        <name>Zn(2+)</name>
        <dbReference type="ChEBI" id="CHEBI:29105"/>
    </ligand>
</feature>
<feature type="binding site" evidence="2">
    <location>
        <position position="69"/>
    </location>
    <ligand>
        <name>Zn(2+)</name>
        <dbReference type="ChEBI" id="CHEBI:29105"/>
    </ligand>
</feature>
<feature type="binding site" evidence="2">
    <location>
        <position position="116"/>
    </location>
    <ligand>
        <name>Zn(2+)</name>
        <dbReference type="ChEBI" id="CHEBI:29105"/>
    </ligand>
</feature>
<feature type="binding site" evidence="2">
    <location>
        <position position="119"/>
    </location>
    <ligand>
        <name>Zn(2+)</name>
        <dbReference type="ChEBI" id="CHEBI:29105"/>
    </ligand>
</feature>
<proteinExistence type="inferred from homology"/>
<reference key="1">
    <citation type="journal article" date="1994" name="Nature">
        <title>2.2 Mb of contiguous nucleotide sequence from chromosome III of C. elegans.</title>
        <authorList>
            <person name="Wilson R."/>
            <person name="Ainscough R."/>
            <person name="Anderson K."/>
            <person name="Baynes C."/>
            <person name="Berks M."/>
            <person name="Bonfield J."/>
            <person name="Burton J."/>
            <person name="Connell M."/>
            <person name="Copsey T."/>
            <person name="Cooper J."/>
            <person name="Coulson A."/>
            <person name="Craxton M."/>
            <person name="Dear S."/>
            <person name="Du Z."/>
            <person name="Durbin R."/>
            <person name="Favello A."/>
            <person name="Fraser A."/>
            <person name="Fulton L."/>
            <person name="Gardner A."/>
            <person name="Green P."/>
            <person name="Hawkins T."/>
            <person name="Hillier L."/>
            <person name="Jier M."/>
            <person name="Johnston L."/>
            <person name="Jones M."/>
            <person name="Kershaw J."/>
            <person name="Kirsten J."/>
            <person name="Laisster N."/>
            <person name="Latreille P."/>
            <person name="Lightning J."/>
            <person name="Lloyd C."/>
            <person name="Mortimore B."/>
            <person name="O'Callaghan M."/>
            <person name="Parsons J."/>
            <person name="Percy C."/>
            <person name="Rifken L."/>
            <person name="Roopra A."/>
            <person name="Saunders D."/>
            <person name="Shownkeen R."/>
            <person name="Sims M."/>
            <person name="Smaldon N."/>
            <person name="Smith A."/>
            <person name="Smith M."/>
            <person name="Sonnhammer E."/>
            <person name="Staden R."/>
            <person name="Sulston J."/>
            <person name="Thierry-Mieg J."/>
            <person name="Thomas K."/>
            <person name="Vaudin M."/>
            <person name="Vaughan K."/>
            <person name="Waterston R."/>
            <person name="Watson A."/>
            <person name="Weinstock L."/>
            <person name="Wilkinson-Sproat J."/>
            <person name="Wohldman P."/>
        </authorList>
    </citation>
    <scope>NUCLEOTIDE SEQUENCE [LARGE SCALE GENOMIC DNA]</scope>
    <source>
        <strain>Bristol N2</strain>
    </source>
</reference>
<reference key="2">
    <citation type="journal article" date="1998" name="Science">
        <title>Genome sequence of the nematode C. elegans: a platform for investigating biology.</title>
        <authorList>
            <consortium name="The C. elegans sequencing consortium"/>
        </authorList>
    </citation>
    <scope>NUCLEOTIDE SEQUENCE [LARGE SCALE GENOMIC DNA]</scope>
    <source>
        <strain>Bristol N2</strain>
    </source>
</reference>